<comment type="function">
    <text evidence="1">Produces ATP from ADP in the presence of a proton gradient across the membrane. The catalytic sites are hosted primarily by the beta subunits.</text>
</comment>
<comment type="catalytic activity">
    <reaction evidence="1">
        <text>ATP + H2O + 4 H(+)(in) = ADP + phosphate + 5 H(+)(out)</text>
        <dbReference type="Rhea" id="RHEA:57720"/>
        <dbReference type="ChEBI" id="CHEBI:15377"/>
        <dbReference type="ChEBI" id="CHEBI:15378"/>
        <dbReference type="ChEBI" id="CHEBI:30616"/>
        <dbReference type="ChEBI" id="CHEBI:43474"/>
        <dbReference type="ChEBI" id="CHEBI:456216"/>
        <dbReference type="EC" id="7.1.2.2"/>
    </reaction>
</comment>
<comment type="subunit">
    <text evidence="1">F-type ATPases have 2 components, CF(1) - the catalytic core - and CF(0) - the membrane proton channel. CF(1) has five subunits: alpha(3), beta(3), gamma(1), delta(1), epsilon(1). CF(0) has three main subunits: a(1), b(2) and c(9-12). The alpha and beta chains form an alternating ring which encloses part of the gamma chain. CF(1) is attached to CF(0) by a central stalk formed by the gamma and epsilon chains, while a peripheral stalk is formed by the delta and b chains.</text>
</comment>
<comment type="subcellular location">
    <subcellularLocation>
        <location evidence="1">Cell inner membrane</location>
        <topology evidence="1">Peripheral membrane protein</topology>
    </subcellularLocation>
</comment>
<comment type="similarity">
    <text evidence="1">Belongs to the ATPase alpha/beta chains family.</text>
</comment>
<sequence length="473" mass="50905">MTKNIGKITQIISAVVDVKFTNNSKLPAILNALECYSDNQRIVLEVVQHIGDDTVRCIAMDSTEGLVRGLEVVDTGSPICIPVGTATLGRIMNVVGESIDGKGEIKSSNVSSIYKPAPSFTNQSSERTILVTGIKVVDLLAPYTKGGKIGLFGGAGVGKTVLIMELINNVAKAHGGYTVFAGVGERTREGNDLYHEMIDSGVINLEEPEKSKVALVYGQMDEPPGARARVALSGLTIAESFRDMNEGQDVLFFVDNIFRFTQAGSEVSALLGRVPSAVGYQPTLATDMGALQERITSTKHGSITSVQAIYVPADDLTDPAPATSFAHLDATTVLSRQIAELGIYPAVDPLDSNSQVLDPMIVGEEHYSVARQVQQVLQTYKSLQDIIAILGMDELSEEDKLTVSRARKIQRFLSQPFHVAEVFTGVEGKFVDLADTIEGFKGLVEGQYDGLPEAAFYMVGTIDEAIEKARTLK</sequence>
<reference key="1">
    <citation type="submission" date="2007-09" db="EMBL/GenBank/DDBJ databases">
        <title>Complete genome sequence of Rickettsia canadensis.</title>
        <authorList>
            <person name="Madan A."/>
            <person name="Fahey J."/>
            <person name="Helton E."/>
            <person name="Ketteman M."/>
            <person name="Madan A."/>
            <person name="Rodrigues S."/>
            <person name="Sanchez A."/>
            <person name="Whiting M."/>
            <person name="Dasch G."/>
            <person name="Eremeeva M."/>
        </authorList>
    </citation>
    <scope>NUCLEOTIDE SEQUENCE [LARGE SCALE GENOMIC DNA]</scope>
    <source>
        <strain>McKiel</strain>
    </source>
</reference>
<evidence type="ECO:0000255" key="1">
    <source>
        <dbReference type="HAMAP-Rule" id="MF_01347"/>
    </source>
</evidence>
<dbReference type="EC" id="7.1.2.2" evidence="1"/>
<dbReference type="EMBL" id="CP000409">
    <property type="protein sequence ID" value="ABV73937.1"/>
    <property type="molecule type" value="Genomic_DNA"/>
</dbReference>
<dbReference type="RefSeq" id="WP_012149132.1">
    <property type="nucleotide sequence ID" value="NC_009879.1"/>
</dbReference>
<dbReference type="SMR" id="A8F004"/>
<dbReference type="STRING" id="293613.A1E_05105"/>
<dbReference type="KEGG" id="rcm:A1E_05105"/>
<dbReference type="eggNOG" id="COG0055">
    <property type="taxonomic scope" value="Bacteria"/>
</dbReference>
<dbReference type="HOGENOM" id="CLU_022398_0_2_5"/>
<dbReference type="Proteomes" id="UP000007056">
    <property type="component" value="Chromosome"/>
</dbReference>
<dbReference type="GO" id="GO:0005886">
    <property type="term" value="C:plasma membrane"/>
    <property type="evidence" value="ECO:0007669"/>
    <property type="project" value="UniProtKB-SubCell"/>
</dbReference>
<dbReference type="GO" id="GO:0045259">
    <property type="term" value="C:proton-transporting ATP synthase complex"/>
    <property type="evidence" value="ECO:0007669"/>
    <property type="project" value="UniProtKB-KW"/>
</dbReference>
<dbReference type="GO" id="GO:0005524">
    <property type="term" value="F:ATP binding"/>
    <property type="evidence" value="ECO:0007669"/>
    <property type="project" value="UniProtKB-UniRule"/>
</dbReference>
<dbReference type="GO" id="GO:0016887">
    <property type="term" value="F:ATP hydrolysis activity"/>
    <property type="evidence" value="ECO:0007669"/>
    <property type="project" value="InterPro"/>
</dbReference>
<dbReference type="GO" id="GO:0046933">
    <property type="term" value="F:proton-transporting ATP synthase activity, rotational mechanism"/>
    <property type="evidence" value="ECO:0007669"/>
    <property type="project" value="UniProtKB-UniRule"/>
</dbReference>
<dbReference type="CDD" id="cd18110">
    <property type="entry name" value="ATP-synt_F1_beta_C"/>
    <property type="match status" value="1"/>
</dbReference>
<dbReference type="CDD" id="cd18115">
    <property type="entry name" value="ATP-synt_F1_beta_N"/>
    <property type="match status" value="1"/>
</dbReference>
<dbReference type="CDD" id="cd01133">
    <property type="entry name" value="F1-ATPase_beta_CD"/>
    <property type="match status" value="1"/>
</dbReference>
<dbReference type="FunFam" id="1.10.1140.10:FF:000001">
    <property type="entry name" value="ATP synthase subunit beta"/>
    <property type="match status" value="1"/>
</dbReference>
<dbReference type="FunFam" id="2.40.10.170:FF:000014">
    <property type="entry name" value="ATP synthase subunit beta"/>
    <property type="match status" value="1"/>
</dbReference>
<dbReference type="FunFam" id="3.40.50.300:FF:000026">
    <property type="entry name" value="ATP synthase subunit beta"/>
    <property type="match status" value="1"/>
</dbReference>
<dbReference type="Gene3D" id="2.40.10.170">
    <property type="match status" value="1"/>
</dbReference>
<dbReference type="Gene3D" id="1.10.1140.10">
    <property type="entry name" value="Bovine Mitochondrial F1-atpase, Atp Synthase Beta Chain, Chain D, domain 3"/>
    <property type="match status" value="1"/>
</dbReference>
<dbReference type="Gene3D" id="3.40.50.300">
    <property type="entry name" value="P-loop containing nucleotide triphosphate hydrolases"/>
    <property type="match status" value="1"/>
</dbReference>
<dbReference type="HAMAP" id="MF_01347">
    <property type="entry name" value="ATP_synth_beta_bact"/>
    <property type="match status" value="1"/>
</dbReference>
<dbReference type="InterPro" id="IPR003593">
    <property type="entry name" value="AAA+_ATPase"/>
</dbReference>
<dbReference type="InterPro" id="IPR055190">
    <property type="entry name" value="ATP-synt_VA_C"/>
</dbReference>
<dbReference type="InterPro" id="IPR005722">
    <property type="entry name" value="ATP_synth_F1_bsu"/>
</dbReference>
<dbReference type="InterPro" id="IPR020003">
    <property type="entry name" value="ATPase_a/bsu_AS"/>
</dbReference>
<dbReference type="InterPro" id="IPR050053">
    <property type="entry name" value="ATPase_alpha/beta_chains"/>
</dbReference>
<dbReference type="InterPro" id="IPR004100">
    <property type="entry name" value="ATPase_F1/V1/A1_a/bsu_N"/>
</dbReference>
<dbReference type="InterPro" id="IPR036121">
    <property type="entry name" value="ATPase_F1/V1/A1_a/bsu_N_sf"/>
</dbReference>
<dbReference type="InterPro" id="IPR000194">
    <property type="entry name" value="ATPase_F1/V1/A1_a/bsu_nucl-bd"/>
</dbReference>
<dbReference type="InterPro" id="IPR024034">
    <property type="entry name" value="ATPase_F1/V1_b/a_C"/>
</dbReference>
<dbReference type="InterPro" id="IPR027417">
    <property type="entry name" value="P-loop_NTPase"/>
</dbReference>
<dbReference type="NCBIfam" id="TIGR01039">
    <property type="entry name" value="atpD"/>
    <property type="match status" value="1"/>
</dbReference>
<dbReference type="PANTHER" id="PTHR15184">
    <property type="entry name" value="ATP SYNTHASE"/>
    <property type="match status" value="1"/>
</dbReference>
<dbReference type="PANTHER" id="PTHR15184:SF71">
    <property type="entry name" value="ATP SYNTHASE SUBUNIT BETA, MITOCHONDRIAL"/>
    <property type="match status" value="1"/>
</dbReference>
<dbReference type="Pfam" id="PF00006">
    <property type="entry name" value="ATP-synt_ab"/>
    <property type="match status" value="1"/>
</dbReference>
<dbReference type="Pfam" id="PF02874">
    <property type="entry name" value="ATP-synt_ab_N"/>
    <property type="match status" value="1"/>
</dbReference>
<dbReference type="Pfam" id="PF22919">
    <property type="entry name" value="ATP-synt_VA_C"/>
    <property type="match status" value="1"/>
</dbReference>
<dbReference type="PIRSF" id="PIRSF039072">
    <property type="entry name" value="ATPase_subunit_beta"/>
    <property type="match status" value="1"/>
</dbReference>
<dbReference type="SMART" id="SM00382">
    <property type="entry name" value="AAA"/>
    <property type="match status" value="1"/>
</dbReference>
<dbReference type="SUPFAM" id="SSF47917">
    <property type="entry name" value="C-terminal domain of alpha and beta subunits of F1 ATP synthase"/>
    <property type="match status" value="1"/>
</dbReference>
<dbReference type="SUPFAM" id="SSF50615">
    <property type="entry name" value="N-terminal domain of alpha and beta subunits of F1 ATP synthase"/>
    <property type="match status" value="1"/>
</dbReference>
<dbReference type="SUPFAM" id="SSF52540">
    <property type="entry name" value="P-loop containing nucleoside triphosphate hydrolases"/>
    <property type="match status" value="1"/>
</dbReference>
<dbReference type="PROSITE" id="PS00152">
    <property type="entry name" value="ATPASE_ALPHA_BETA"/>
    <property type="match status" value="1"/>
</dbReference>
<name>ATPB_RICCK</name>
<protein>
    <recommendedName>
        <fullName evidence="1">ATP synthase subunit beta</fullName>
        <ecNumber evidence="1">7.1.2.2</ecNumber>
    </recommendedName>
    <alternativeName>
        <fullName evidence="1">ATP synthase F1 sector subunit beta</fullName>
    </alternativeName>
    <alternativeName>
        <fullName evidence="1">F-ATPase subunit beta</fullName>
    </alternativeName>
</protein>
<proteinExistence type="inferred from homology"/>
<keyword id="KW-0066">ATP synthesis</keyword>
<keyword id="KW-0067">ATP-binding</keyword>
<keyword id="KW-0997">Cell inner membrane</keyword>
<keyword id="KW-1003">Cell membrane</keyword>
<keyword id="KW-0139">CF(1)</keyword>
<keyword id="KW-0375">Hydrogen ion transport</keyword>
<keyword id="KW-0406">Ion transport</keyword>
<keyword id="KW-0472">Membrane</keyword>
<keyword id="KW-0547">Nucleotide-binding</keyword>
<keyword id="KW-1278">Translocase</keyword>
<keyword id="KW-0813">Transport</keyword>
<gene>
    <name evidence="1" type="primary">atpD</name>
    <name type="ordered locus">A1E_05105</name>
</gene>
<accession>A8F004</accession>
<organism>
    <name type="scientific">Rickettsia canadensis (strain McKiel)</name>
    <dbReference type="NCBI Taxonomy" id="293613"/>
    <lineage>
        <taxon>Bacteria</taxon>
        <taxon>Pseudomonadati</taxon>
        <taxon>Pseudomonadota</taxon>
        <taxon>Alphaproteobacteria</taxon>
        <taxon>Rickettsiales</taxon>
        <taxon>Rickettsiaceae</taxon>
        <taxon>Rickettsieae</taxon>
        <taxon>Rickettsia</taxon>
        <taxon>belli group</taxon>
    </lineage>
</organism>
<feature type="chain" id="PRO_1000055154" description="ATP synthase subunit beta">
    <location>
        <begin position="1"/>
        <end position="473"/>
    </location>
</feature>
<feature type="binding site" evidence="1">
    <location>
        <begin position="153"/>
        <end position="160"/>
    </location>
    <ligand>
        <name>ATP</name>
        <dbReference type="ChEBI" id="CHEBI:30616"/>
    </ligand>
</feature>